<comment type="function">
    <text evidence="1">Phosphorylation of dTMP to form dTDP in both de novo and salvage pathways of dTTP synthesis.</text>
</comment>
<comment type="catalytic activity">
    <reaction evidence="1">
        <text>dTMP + ATP = dTDP + ADP</text>
        <dbReference type="Rhea" id="RHEA:13517"/>
        <dbReference type="ChEBI" id="CHEBI:30616"/>
        <dbReference type="ChEBI" id="CHEBI:58369"/>
        <dbReference type="ChEBI" id="CHEBI:63528"/>
        <dbReference type="ChEBI" id="CHEBI:456216"/>
        <dbReference type="EC" id="2.7.4.9"/>
    </reaction>
</comment>
<comment type="similarity">
    <text evidence="1">Belongs to the thymidylate kinase family.</text>
</comment>
<sequence>MKSKFIVIEGLEGAGKTSVIQQIITILHSNGIHNIISTRDPGGTPLAETIRDIIKKGMNGEYITDYTELLLLYAARTQLVAQVIKPALMSGTWVISDRYDLSSQAYQGGGRGIDIRLLQNLRDAALGKFYPDLTIYLDLPPSKCRARIRARGIPLDRIEMESLSFFQRTSIRYRELVANDSRIITIDAQQSIAELNATIRNNIERWLKSQQK</sequence>
<reference key="1">
    <citation type="journal article" date="2006" name="PLoS Biol.">
        <title>Metabolic complementarity and genomics of the dual bacterial symbiosis of sharpshooters.</title>
        <authorList>
            <person name="Wu D."/>
            <person name="Daugherty S.C."/>
            <person name="Van Aken S.E."/>
            <person name="Pai G.H."/>
            <person name="Watkins K.L."/>
            <person name="Khouri H."/>
            <person name="Tallon L.J."/>
            <person name="Zaborsky J.M."/>
            <person name="Dunbar H.E."/>
            <person name="Tran P.L."/>
            <person name="Moran N.A."/>
            <person name="Eisen J.A."/>
        </authorList>
    </citation>
    <scope>NUCLEOTIDE SEQUENCE [LARGE SCALE GENOMIC DNA]</scope>
</reference>
<evidence type="ECO:0000255" key="1">
    <source>
        <dbReference type="HAMAP-Rule" id="MF_00165"/>
    </source>
</evidence>
<protein>
    <recommendedName>
        <fullName evidence="1">Thymidylate kinase</fullName>
        <ecNumber evidence="1">2.7.4.9</ecNumber>
    </recommendedName>
    <alternativeName>
        <fullName evidence="1">dTMP kinase</fullName>
    </alternativeName>
</protein>
<feature type="chain" id="PRO_1000023149" description="Thymidylate kinase">
    <location>
        <begin position="1"/>
        <end position="212"/>
    </location>
</feature>
<feature type="binding site" evidence="1">
    <location>
        <begin position="10"/>
        <end position="17"/>
    </location>
    <ligand>
        <name>ATP</name>
        <dbReference type="ChEBI" id="CHEBI:30616"/>
    </ligand>
</feature>
<organism>
    <name type="scientific">Baumannia cicadellinicola subsp. Homalodisca coagulata</name>
    <dbReference type="NCBI Taxonomy" id="374463"/>
    <lineage>
        <taxon>Bacteria</taxon>
        <taxon>Pseudomonadati</taxon>
        <taxon>Pseudomonadota</taxon>
        <taxon>Gammaproteobacteria</taxon>
        <taxon>Candidatus Palibaumannia</taxon>
    </lineage>
</organism>
<proteinExistence type="inferred from homology"/>
<keyword id="KW-0067">ATP-binding</keyword>
<keyword id="KW-0418">Kinase</keyword>
<keyword id="KW-0545">Nucleotide biosynthesis</keyword>
<keyword id="KW-0547">Nucleotide-binding</keyword>
<keyword id="KW-1185">Reference proteome</keyword>
<keyword id="KW-0808">Transferase</keyword>
<name>KTHY_BAUCH</name>
<dbReference type="EC" id="2.7.4.9" evidence="1"/>
<dbReference type="EMBL" id="CP000238">
    <property type="protein sequence ID" value="ABF14009.1"/>
    <property type="molecule type" value="Genomic_DNA"/>
</dbReference>
<dbReference type="RefSeq" id="WP_011520605.1">
    <property type="nucleotide sequence ID" value="NC_007984.1"/>
</dbReference>
<dbReference type="SMR" id="Q1LT42"/>
<dbReference type="STRING" id="374463.BCI_0431"/>
<dbReference type="KEGG" id="bci:BCI_0431"/>
<dbReference type="HOGENOM" id="CLU_049131_0_1_6"/>
<dbReference type="OrthoDB" id="9774907at2"/>
<dbReference type="Proteomes" id="UP000002427">
    <property type="component" value="Chromosome"/>
</dbReference>
<dbReference type="GO" id="GO:0005829">
    <property type="term" value="C:cytosol"/>
    <property type="evidence" value="ECO:0007669"/>
    <property type="project" value="TreeGrafter"/>
</dbReference>
<dbReference type="GO" id="GO:0005524">
    <property type="term" value="F:ATP binding"/>
    <property type="evidence" value="ECO:0007669"/>
    <property type="project" value="UniProtKB-UniRule"/>
</dbReference>
<dbReference type="GO" id="GO:0004798">
    <property type="term" value="F:dTMP kinase activity"/>
    <property type="evidence" value="ECO:0007669"/>
    <property type="project" value="UniProtKB-UniRule"/>
</dbReference>
<dbReference type="GO" id="GO:0006233">
    <property type="term" value="P:dTDP biosynthetic process"/>
    <property type="evidence" value="ECO:0007669"/>
    <property type="project" value="InterPro"/>
</dbReference>
<dbReference type="GO" id="GO:0006235">
    <property type="term" value="P:dTTP biosynthetic process"/>
    <property type="evidence" value="ECO:0007669"/>
    <property type="project" value="UniProtKB-UniRule"/>
</dbReference>
<dbReference type="GO" id="GO:0006227">
    <property type="term" value="P:dUDP biosynthetic process"/>
    <property type="evidence" value="ECO:0007669"/>
    <property type="project" value="TreeGrafter"/>
</dbReference>
<dbReference type="CDD" id="cd01672">
    <property type="entry name" value="TMPK"/>
    <property type="match status" value="1"/>
</dbReference>
<dbReference type="FunFam" id="3.40.50.300:FF:000225">
    <property type="entry name" value="Thymidylate kinase"/>
    <property type="match status" value="1"/>
</dbReference>
<dbReference type="Gene3D" id="3.40.50.300">
    <property type="entry name" value="P-loop containing nucleotide triphosphate hydrolases"/>
    <property type="match status" value="1"/>
</dbReference>
<dbReference type="HAMAP" id="MF_00165">
    <property type="entry name" value="Thymidylate_kinase"/>
    <property type="match status" value="1"/>
</dbReference>
<dbReference type="InterPro" id="IPR027417">
    <property type="entry name" value="P-loop_NTPase"/>
</dbReference>
<dbReference type="InterPro" id="IPR039430">
    <property type="entry name" value="Thymidylate_kin-like_dom"/>
</dbReference>
<dbReference type="InterPro" id="IPR018095">
    <property type="entry name" value="Thymidylate_kin_CS"/>
</dbReference>
<dbReference type="InterPro" id="IPR018094">
    <property type="entry name" value="Thymidylate_kinase"/>
</dbReference>
<dbReference type="NCBIfam" id="TIGR00041">
    <property type="entry name" value="DTMP_kinase"/>
    <property type="match status" value="1"/>
</dbReference>
<dbReference type="PANTHER" id="PTHR10344">
    <property type="entry name" value="THYMIDYLATE KINASE"/>
    <property type="match status" value="1"/>
</dbReference>
<dbReference type="PANTHER" id="PTHR10344:SF4">
    <property type="entry name" value="UMP-CMP KINASE 2, MITOCHONDRIAL"/>
    <property type="match status" value="1"/>
</dbReference>
<dbReference type="Pfam" id="PF02223">
    <property type="entry name" value="Thymidylate_kin"/>
    <property type="match status" value="1"/>
</dbReference>
<dbReference type="SUPFAM" id="SSF52540">
    <property type="entry name" value="P-loop containing nucleoside triphosphate hydrolases"/>
    <property type="match status" value="1"/>
</dbReference>
<dbReference type="PROSITE" id="PS01331">
    <property type="entry name" value="THYMIDYLATE_KINASE"/>
    <property type="match status" value="1"/>
</dbReference>
<gene>
    <name evidence="1" type="primary">tmk</name>
    <name type="ordered locus">BCI_0431</name>
</gene>
<accession>Q1LT42</accession>